<sequence>MFLAQEIIRKKRNGLALSSEEIQFFVQGITTNSVSEGQIAALGMAVYFNDMNMDERIALTTAMRDSGTVLNWQSLGLNGPVIDKHSTGGVGDVISLMLGPMAAACGGYVPMISGRGLGHTGGTLDKFDAIPGYQTEPSSELFRKVVKDVGVAIIGQTGDLVPADKRFYSIRDNTATVESISLITASILSKKLACNLDALAMDVKVGSGAFMPTYEASEELARSIAAVANGAGTKTTALLTDMNQVLASCAGNAVEVKEAIDFLTGAYRNPRLYEVTMGLCAEMLLLGGLASNEADARAKLNRVLDNGRAAELFGKMVSGLGGPVDFVENYSKYLPQSQIIRPVFADMQGYAYSMDTRELGLAVVTLGGGRRKPGDALDYSVGLTQVCALGDKVDSSTPIAVIHAQSEAAFAEAELAVKKAIHIGETAPEKTPEIYAYIRASDL</sequence>
<comment type="function">
    <text evidence="1">The enzymes which catalyze the reversible phosphorolysis of pyrimidine nucleosides are involved in the degradation of these compounds and in their utilization as carbon and energy sources, or in the rescue of pyrimidine bases for nucleotide synthesis.</text>
</comment>
<comment type="catalytic activity">
    <reaction evidence="1">
        <text>thymidine + phosphate = 2-deoxy-alpha-D-ribose 1-phosphate + thymine</text>
        <dbReference type="Rhea" id="RHEA:16037"/>
        <dbReference type="ChEBI" id="CHEBI:17748"/>
        <dbReference type="ChEBI" id="CHEBI:17821"/>
        <dbReference type="ChEBI" id="CHEBI:43474"/>
        <dbReference type="ChEBI" id="CHEBI:57259"/>
        <dbReference type="EC" id="2.4.2.4"/>
    </reaction>
</comment>
<comment type="pathway">
    <text evidence="1">Pyrimidine metabolism; dTMP biosynthesis via salvage pathway; dTMP from thymine: step 1/2.</text>
</comment>
<comment type="subunit">
    <text evidence="1">Homodimer.</text>
</comment>
<comment type="similarity">
    <text evidence="1">Belongs to the thymidine/pyrimidine-nucleoside phosphorylase family.</text>
</comment>
<name>TYPH_SHEB2</name>
<evidence type="ECO:0000255" key="1">
    <source>
        <dbReference type="HAMAP-Rule" id="MF_01628"/>
    </source>
</evidence>
<reference key="1">
    <citation type="submission" date="2008-12" db="EMBL/GenBank/DDBJ databases">
        <title>Complete sequence of chromosome of Shewanella baltica OS223.</title>
        <authorList>
            <consortium name="US DOE Joint Genome Institute"/>
            <person name="Lucas S."/>
            <person name="Copeland A."/>
            <person name="Lapidus A."/>
            <person name="Glavina del Rio T."/>
            <person name="Dalin E."/>
            <person name="Tice H."/>
            <person name="Bruce D."/>
            <person name="Goodwin L."/>
            <person name="Pitluck S."/>
            <person name="Chertkov O."/>
            <person name="Meincke L."/>
            <person name="Brettin T."/>
            <person name="Detter J.C."/>
            <person name="Han C."/>
            <person name="Kuske C.R."/>
            <person name="Larimer F."/>
            <person name="Land M."/>
            <person name="Hauser L."/>
            <person name="Kyrpides N."/>
            <person name="Ovchinnikova G."/>
            <person name="Brettar I."/>
            <person name="Rodrigues J."/>
            <person name="Konstantinidis K."/>
            <person name="Tiedje J."/>
        </authorList>
    </citation>
    <scope>NUCLEOTIDE SEQUENCE [LARGE SCALE GENOMIC DNA]</scope>
    <source>
        <strain>OS223</strain>
    </source>
</reference>
<protein>
    <recommendedName>
        <fullName evidence="1">Thymidine phosphorylase</fullName>
        <ecNumber evidence="1">2.4.2.4</ecNumber>
    </recommendedName>
    <alternativeName>
        <fullName evidence="1">TdRPase</fullName>
    </alternativeName>
</protein>
<feature type="chain" id="PRO_1000186273" description="Thymidine phosphorylase">
    <location>
        <begin position="1"/>
        <end position="443"/>
    </location>
</feature>
<dbReference type="EC" id="2.4.2.4" evidence="1"/>
<dbReference type="EMBL" id="CP001252">
    <property type="protein sequence ID" value="ACK45656.1"/>
    <property type="molecule type" value="Genomic_DNA"/>
</dbReference>
<dbReference type="RefSeq" id="WP_012587040.1">
    <property type="nucleotide sequence ID" value="NC_011663.1"/>
</dbReference>
<dbReference type="SMR" id="B8E6P5"/>
<dbReference type="KEGG" id="sbp:Sbal223_1141"/>
<dbReference type="HOGENOM" id="CLU_025040_0_1_6"/>
<dbReference type="UniPathway" id="UPA00578">
    <property type="reaction ID" value="UER00638"/>
</dbReference>
<dbReference type="Proteomes" id="UP000002507">
    <property type="component" value="Chromosome"/>
</dbReference>
<dbReference type="GO" id="GO:0005829">
    <property type="term" value="C:cytosol"/>
    <property type="evidence" value="ECO:0007669"/>
    <property type="project" value="TreeGrafter"/>
</dbReference>
<dbReference type="GO" id="GO:0004645">
    <property type="term" value="F:1,4-alpha-oligoglucan phosphorylase activity"/>
    <property type="evidence" value="ECO:0007669"/>
    <property type="project" value="InterPro"/>
</dbReference>
<dbReference type="GO" id="GO:0009032">
    <property type="term" value="F:thymidine phosphorylase activity"/>
    <property type="evidence" value="ECO:0007669"/>
    <property type="project" value="UniProtKB-UniRule"/>
</dbReference>
<dbReference type="GO" id="GO:0006206">
    <property type="term" value="P:pyrimidine nucleobase metabolic process"/>
    <property type="evidence" value="ECO:0007669"/>
    <property type="project" value="InterPro"/>
</dbReference>
<dbReference type="GO" id="GO:0046104">
    <property type="term" value="P:thymidine metabolic process"/>
    <property type="evidence" value="ECO:0007669"/>
    <property type="project" value="UniProtKB-UniRule"/>
</dbReference>
<dbReference type="FunFam" id="3.40.1030.10:FF:000001">
    <property type="entry name" value="Thymidine phosphorylase"/>
    <property type="match status" value="1"/>
</dbReference>
<dbReference type="FunFam" id="3.90.1170.30:FF:000001">
    <property type="entry name" value="Thymidine phosphorylase"/>
    <property type="match status" value="1"/>
</dbReference>
<dbReference type="Gene3D" id="3.40.1030.10">
    <property type="entry name" value="Nucleoside phosphorylase/phosphoribosyltransferase catalytic domain"/>
    <property type="match status" value="1"/>
</dbReference>
<dbReference type="Gene3D" id="3.90.1170.30">
    <property type="entry name" value="Pyrimidine nucleoside phosphorylase-like, C-terminal domain"/>
    <property type="match status" value="1"/>
</dbReference>
<dbReference type="Gene3D" id="1.20.970.10">
    <property type="entry name" value="Transferase, Pyrimidine Nucleoside Phosphorylase, Chain C"/>
    <property type="match status" value="1"/>
</dbReference>
<dbReference type="HAMAP" id="MF_01628">
    <property type="entry name" value="Thymid_phosp"/>
    <property type="match status" value="1"/>
</dbReference>
<dbReference type="InterPro" id="IPR000312">
    <property type="entry name" value="Glycosyl_Trfase_fam3"/>
</dbReference>
<dbReference type="InterPro" id="IPR017459">
    <property type="entry name" value="Glycosyl_Trfase_fam3_N_dom"/>
</dbReference>
<dbReference type="InterPro" id="IPR036320">
    <property type="entry name" value="Glycosyl_Trfase_fam3_N_dom_sf"/>
</dbReference>
<dbReference type="InterPro" id="IPR035902">
    <property type="entry name" value="Nuc_phospho_transferase"/>
</dbReference>
<dbReference type="InterPro" id="IPR036566">
    <property type="entry name" value="PYNP-like_C_sf"/>
</dbReference>
<dbReference type="InterPro" id="IPR013102">
    <property type="entry name" value="PYNP_C"/>
</dbReference>
<dbReference type="InterPro" id="IPR018090">
    <property type="entry name" value="Pyrmidine_PPas_bac/euk"/>
</dbReference>
<dbReference type="InterPro" id="IPR017872">
    <property type="entry name" value="Pyrmidine_PPase_CS"/>
</dbReference>
<dbReference type="InterPro" id="IPR000053">
    <property type="entry name" value="Thymidine/pyrmidine_PPase"/>
</dbReference>
<dbReference type="InterPro" id="IPR013465">
    <property type="entry name" value="Thymidine_Pase"/>
</dbReference>
<dbReference type="NCBIfam" id="NF004490">
    <property type="entry name" value="PRK05820.1"/>
    <property type="match status" value="1"/>
</dbReference>
<dbReference type="NCBIfam" id="TIGR02643">
    <property type="entry name" value="T_phosphoryl"/>
    <property type="match status" value="1"/>
</dbReference>
<dbReference type="NCBIfam" id="TIGR02644">
    <property type="entry name" value="Y_phosphoryl"/>
    <property type="match status" value="1"/>
</dbReference>
<dbReference type="PANTHER" id="PTHR10515">
    <property type="entry name" value="THYMIDINE PHOSPHORYLASE"/>
    <property type="match status" value="1"/>
</dbReference>
<dbReference type="PANTHER" id="PTHR10515:SF0">
    <property type="entry name" value="THYMIDINE PHOSPHORYLASE"/>
    <property type="match status" value="1"/>
</dbReference>
<dbReference type="Pfam" id="PF02885">
    <property type="entry name" value="Glycos_trans_3N"/>
    <property type="match status" value="1"/>
</dbReference>
<dbReference type="Pfam" id="PF00591">
    <property type="entry name" value="Glycos_transf_3"/>
    <property type="match status" value="1"/>
</dbReference>
<dbReference type="Pfam" id="PF07831">
    <property type="entry name" value="PYNP_C"/>
    <property type="match status" value="1"/>
</dbReference>
<dbReference type="PIRSF" id="PIRSF000478">
    <property type="entry name" value="TP_PyNP"/>
    <property type="match status" value="1"/>
</dbReference>
<dbReference type="SMART" id="SM00941">
    <property type="entry name" value="PYNP_C"/>
    <property type="match status" value="1"/>
</dbReference>
<dbReference type="SUPFAM" id="SSF52418">
    <property type="entry name" value="Nucleoside phosphorylase/phosphoribosyltransferase catalytic domain"/>
    <property type="match status" value="1"/>
</dbReference>
<dbReference type="SUPFAM" id="SSF47648">
    <property type="entry name" value="Nucleoside phosphorylase/phosphoribosyltransferase N-terminal domain"/>
    <property type="match status" value="1"/>
</dbReference>
<dbReference type="SUPFAM" id="SSF54680">
    <property type="entry name" value="Pyrimidine nucleoside phosphorylase C-terminal domain"/>
    <property type="match status" value="1"/>
</dbReference>
<dbReference type="PROSITE" id="PS00647">
    <property type="entry name" value="THYMID_PHOSPHORYLASE"/>
    <property type="match status" value="1"/>
</dbReference>
<gene>
    <name evidence="1" type="primary">deoA</name>
    <name type="ordered locus">Sbal223_1141</name>
</gene>
<proteinExistence type="inferred from homology"/>
<accession>B8E6P5</accession>
<keyword id="KW-0328">Glycosyltransferase</keyword>
<keyword id="KW-0808">Transferase</keyword>
<organism>
    <name type="scientific">Shewanella baltica (strain OS223)</name>
    <dbReference type="NCBI Taxonomy" id="407976"/>
    <lineage>
        <taxon>Bacteria</taxon>
        <taxon>Pseudomonadati</taxon>
        <taxon>Pseudomonadota</taxon>
        <taxon>Gammaproteobacteria</taxon>
        <taxon>Alteromonadales</taxon>
        <taxon>Shewanellaceae</taxon>
        <taxon>Shewanella</taxon>
    </lineage>
</organism>